<proteinExistence type="inferred from homology"/>
<name>TP8L2_OTOGA</name>
<feature type="chain" id="PRO_0000369393" description="Tumor necrosis factor alpha-induced protein 8-like protein 2">
    <location>
        <begin position="1"/>
        <end position="184"/>
    </location>
</feature>
<feature type="modified residue" description="Phosphoserine" evidence="2">
    <location>
        <position position="3"/>
    </location>
</feature>
<sequence length="184" mass="20643">MESFSSKSLALQAEKKLLSKMAGRSVAHLFIDETSSEVLDELYRVSKEYTHSRPQAQRVIKDLIKVAVKVAVLHRSGCFGSSELALATRFREKLRQGAMTALSFGEVDFTFEAAVLADLLTECRDVLLELVERHLTPKSHSRIRHVFDHFSDPGLLTALYGPEFTQHLGKICDGLRKLLDEGKL</sequence>
<keyword id="KW-0963">Cytoplasm</keyword>
<keyword id="KW-0391">Immunity</keyword>
<keyword id="KW-0399">Innate immunity</keyword>
<keyword id="KW-0458">Lysosome</keyword>
<keyword id="KW-0539">Nucleus</keyword>
<keyword id="KW-0597">Phosphoprotein</keyword>
<keyword id="KW-1185">Reference proteome</keyword>
<keyword id="KW-0832">Ubl conjugation</keyword>
<comment type="function">
    <text evidence="2 3">Acts as a negative regulator of innate and adaptive immunity by maintaining immune homeostasis. Plays a regulatory role in the Toll-like signaling pathway by determining the strength of LPS-induced signaling and gene expression (By similarity). Inhibits TCR-mediated T-cell activation and negatively regulate T-cell function to prevent hyperresponsiveness (By similarity). Also inhibits autolysosome formation via negatively modulating MTOR activation by interacting with RAC1 and promoting the disassociation of the RAC1-MTOR complex (By similarity). Plays an essential role in NK-cell biology by acting as a checkpoint and displaying an expression pattern correlating with NK-cell maturation process and by negatively regulating NK-cell maturation and antitumor immunity (By similarity). Mechanistically, suppresses IL-15-triggered mTOR activity in NK-cells (By similarity).</text>
</comment>
<comment type="subunit">
    <text evidence="2">May interact with CASP8; however, such result is unclear since could not reproduce the interaction with CASP8. Interacts with RAC1.</text>
</comment>
<comment type="subcellular location">
    <subcellularLocation>
        <location evidence="2">Cytoplasm</location>
    </subcellularLocation>
    <subcellularLocation>
        <location evidence="2">Nucleus</location>
    </subcellularLocation>
    <subcellularLocation>
        <location evidence="2">Lysosome</location>
    </subcellularLocation>
</comment>
<comment type="domain">
    <text evidence="1">The central region was initially thought to constitute a DED (death effector) domain. However, 3D-structure data reveal a previously uncharacterized fold that is different from the predicted fold of a DED (death effector) domain. It consists of a large, hydrophobic central cavity that is poised for cofactor binding (By similarity).</text>
</comment>
<comment type="PTM">
    <text evidence="2">Phosphorylated by TAK1/MAP3K7; this phosphorylation triggers association with BTRC and subsequent ubiquitination and degradation.</text>
</comment>
<comment type="PTM">
    <text evidence="2">Ubiquitinated in a BTRC-depdent manner; leading to degradation mediated through the proteasome pathway.</text>
</comment>
<comment type="similarity">
    <text evidence="4">Belongs to the TNFAIP8 family. TNFAIP8L2 subfamily.</text>
</comment>
<reference key="1">
    <citation type="submission" date="2011-03" db="EMBL/GenBank/DDBJ databases">
        <title>Version 3 of the genome sequence of Otolemur garnettii(Bushbaby).</title>
        <authorList>
            <consortium name="The Broad Institute Genome Sequencing Platform"/>
            <person name="Di Palma F."/>
            <person name="Johnson J."/>
            <person name="Lander E.S."/>
            <person name="Lindblad-Toh K."/>
            <person name="Jaffe D.B."/>
            <person name="Gnerre S."/>
            <person name="MacCallum I."/>
            <person name="Przybylski D."/>
            <person name="Ribeiro F.J."/>
            <person name="Burton J.N."/>
            <person name="Walker B.J."/>
            <person name="Sharpe T."/>
            <person name="Hall G."/>
        </authorList>
    </citation>
    <scope>NUCLEOTIDE SEQUENCE [LARGE SCALE GENOMIC DNA]</scope>
</reference>
<protein>
    <recommendedName>
        <fullName>Tumor necrosis factor alpha-induced protein 8-like protein 2</fullName>
        <shortName>TIPE2</shortName>
        <shortName>TNF alpha-induced protein 8-like protein 2</shortName>
        <shortName>TNFAIP8-like protein 2</shortName>
    </recommendedName>
</protein>
<evidence type="ECO:0000250" key="1"/>
<evidence type="ECO:0000250" key="2">
    <source>
        <dbReference type="UniProtKB" id="Q6P589"/>
    </source>
</evidence>
<evidence type="ECO:0000250" key="3">
    <source>
        <dbReference type="UniProtKB" id="Q9D8Y7"/>
    </source>
</evidence>
<evidence type="ECO:0000305" key="4"/>
<gene>
    <name type="primary">TNFAIP8L2</name>
</gene>
<organism>
    <name type="scientific">Otolemur garnettii</name>
    <name type="common">Small-eared galago</name>
    <name type="synonym">Garnett's greater bushbaby</name>
    <dbReference type="NCBI Taxonomy" id="30611"/>
    <lineage>
        <taxon>Eukaryota</taxon>
        <taxon>Metazoa</taxon>
        <taxon>Chordata</taxon>
        <taxon>Craniata</taxon>
        <taxon>Vertebrata</taxon>
        <taxon>Euteleostomi</taxon>
        <taxon>Mammalia</taxon>
        <taxon>Eutheria</taxon>
        <taxon>Euarchontoglires</taxon>
        <taxon>Primates</taxon>
        <taxon>Strepsirrhini</taxon>
        <taxon>Lorisiformes</taxon>
        <taxon>Galagidae</taxon>
        <taxon>Otolemur</taxon>
    </lineage>
</organism>
<dbReference type="EMBL" id="DP000887">
    <property type="protein sequence ID" value="ACG76399.1"/>
    <property type="molecule type" value="Genomic_DNA"/>
</dbReference>
<dbReference type="RefSeq" id="XP_003800431.1">
    <property type="nucleotide sequence ID" value="XM_003800383.1"/>
</dbReference>
<dbReference type="RefSeq" id="XP_023375163.1">
    <property type="nucleotide sequence ID" value="XM_023519395.1"/>
</dbReference>
<dbReference type="RefSeq" id="XP_023375164.1">
    <property type="nucleotide sequence ID" value="XM_023519396.1"/>
</dbReference>
<dbReference type="SMR" id="B4UT01"/>
<dbReference type="FunCoup" id="B4UT01">
    <property type="interactions" value="483"/>
</dbReference>
<dbReference type="STRING" id="30611.ENSOGAP00000002544"/>
<dbReference type="Ensembl" id="ENSOGAT00000002843.2">
    <property type="protein sequence ID" value="ENSOGAP00000002544.2"/>
    <property type="gene ID" value="ENSOGAG00000002842.2"/>
</dbReference>
<dbReference type="GeneID" id="100946355"/>
<dbReference type="eggNOG" id="ENOG502QST4">
    <property type="taxonomic scope" value="Eukaryota"/>
</dbReference>
<dbReference type="GeneTree" id="ENSGT00390000003488"/>
<dbReference type="HOGENOM" id="CLU_085918_1_0_1"/>
<dbReference type="InParanoid" id="B4UT01"/>
<dbReference type="OMA" id="IRRVFDH"/>
<dbReference type="OrthoDB" id="10055976at2759"/>
<dbReference type="TreeFam" id="TF323415"/>
<dbReference type="Proteomes" id="UP000005225">
    <property type="component" value="Unassembled WGS sequence"/>
</dbReference>
<dbReference type="GO" id="GO:0005764">
    <property type="term" value="C:lysosome"/>
    <property type="evidence" value="ECO:0007669"/>
    <property type="project" value="UniProtKB-SubCell"/>
</dbReference>
<dbReference type="GO" id="GO:0005634">
    <property type="term" value="C:nucleus"/>
    <property type="evidence" value="ECO:0007669"/>
    <property type="project" value="UniProtKB-SubCell"/>
</dbReference>
<dbReference type="GO" id="GO:0045087">
    <property type="term" value="P:innate immune response"/>
    <property type="evidence" value="ECO:0007669"/>
    <property type="project" value="UniProtKB-KW"/>
</dbReference>
<dbReference type="GO" id="GO:0050728">
    <property type="term" value="P:negative regulation of inflammatory response"/>
    <property type="evidence" value="ECO:0007669"/>
    <property type="project" value="Ensembl"/>
</dbReference>
<dbReference type="GO" id="GO:0050868">
    <property type="term" value="P:negative regulation of T cell activation"/>
    <property type="evidence" value="ECO:0007669"/>
    <property type="project" value="Ensembl"/>
</dbReference>
<dbReference type="GO" id="GO:0042981">
    <property type="term" value="P:regulation of apoptotic process"/>
    <property type="evidence" value="ECO:0007669"/>
    <property type="project" value="InterPro"/>
</dbReference>
<dbReference type="GO" id="GO:0042110">
    <property type="term" value="P:T cell activation"/>
    <property type="evidence" value="ECO:0007669"/>
    <property type="project" value="Ensembl"/>
</dbReference>
<dbReference type="FunFam" id="1.20.1440.160:FF:000001">
    <property type="entry name" value="Tumor necrosis factor alpha-induced protein 8-like 1"/>
    <property type="match status" value="1"/>
</dbReference>
<dbReference type="Gene3D" id="1.20.1440.160">
    <property type="entry name" value="Tumor necrosis factor alpha-induced protein 8-like"/>
    <property type="match status" value="1"/>
</dbReference>
<dbReference type="InterPro" id="IPR008477">
    <property type="entry name" value="TNFAIP8-like"/>
</dbReference>
<dbReference type="InterPro" id="IPR038355">
    <property type="entry name" value="TNFAIP8_sf"/>
</dbReference>
<dbReference type="PANTHER" id="PTHR12757:SF4">
    <property type="entry name" value="TUMOR NECROSIS FACTOR ALPHA-INDUCED PROTEIN 8-LIKE PROTEIN 2"/>
    <property type="match status" value="1"/>
</dbReference>
<dbReference type="PANTHER" id="PTHR12757">
    <property type="entry name" value="TUMOR NECROSIS FACTOR INDUCED PROTEIN"/>
    <property type="match status" value="1"/>
</dbReference>
<dbReference type="Pfam" id="PF05527">
    <property type="entry name" value="DUF758"/>
    <property type="match status" value="1"/>
</dbReference>
<accession>B4UT01</accession>